<organism>
    <name type="scientific">Escherichia coli O157:H7</name>
    <dbReference type="NCBI Taxonomy" id="83334"/>
    <lineage>
        <taxon>Bacteria</taxon>
        <taxon>Pseudomonadati</taxon>
        <taxon>Pseudomonadota</taxon>
        <taxon>Gammaproteobacteria</taxon>
        <taxon>Enterobacterales</taxon>
        <taxon>Enterobacteriaceae</taxon>
        <taxon>Escherichia</taxon>
    </lineage>
</organism>
<reference key="1">
    <citation type="journal article" date="2001" name="Nature">
        <title>Genome sequence of enterohaemorrhagic Escherichia coli O157:H7.</title>
        <authorList>
            <person name="Perna N.T."/>
            <person name="Plunkett G. III"/>
            <person name="Burland V."/>
            <person name="Mau B."/>
            <person name="Glasner J.D."/>
            <person name="Rose D.J."/>
            <person name="Mayhew G.F."/>
            <person name="Evans P.S."/>
            <person name="Gregor J."/>
            <person name="Kirkpatrick H.A."/>
            <person name="Posfai G."/>
            <person name="Hackett J."/>
            <person name="Klink S."/>
            <person name="Boutin A."/>
            <person name="Shao Y."/>
            <person name="Miller L."/>
            <person name="Grotbeck E.J."/>
            <person name="Davis N.W."/>
            <person name="Lim A."/>
            <person name="Dimalanta E.T."/>
            <person name="Potamousis K."/>
            <person name="Apodaca J."/>
            <person name="Anantharaman T.S."/>
            <person name="Lin J."/>
            <person name="Yen G."/>
            <person name="Schwartz D.C."/>
            <person name="Welch R.A."/>
            <person name="Blattner F.R."/>
        </authorList>
    </citation>
    <scope>NUCLEOTIDE SEQUENCE [LARGE SCALE GENOMIC DNA]</scope>
    <source>
        <strain>O157:H7 / EDL933 / ATCC 700927 / EHEC</strain>
    </source>
</reference>
<reference key="2">
    <citation type="journal article" date="2001" name="DNA Res.">
        <title>Complete genome sequence of enterohemorrhagic Escherichia coli O157:H7 and genomic comparison with a laboratory strain K-12.</title>
        <authorList>
            <person name="Hayashi T."/>
            <person name="Makino K."/>
            <person name="Ohnishi M."/>
            <person name="Kurokawa K."/>
            <person name="Ishii K."/>
            <person name="Yokoyama K."/>
            <person name="Han C.-G."/>
            <person name="Ohtsubo E."/>
            <person name="Nakayama K."/>
            <person name="Murata T."/>
            <person name="Tanaka M."/>
            <person name="Tobe T."/>
            <person name="Iida T."/>
            <person name="Takami H."/>
            <person name="Honda T."/>
            <person name="Sasakawa C."/>
            <person name="Ogasawara N."/>
            <person name="Yasunaga T."/>
            <person name="Kuhara S."/>
            <person name="Shiba T."/>
            <person name="Hattori M."/>
            <person name="Shinagawa H."/>
        </authorList>
    </citation>
    <scope>NUCLEOTIDE SEQUENCE [LARGE SCALE GENOMIC DNA]</scope>
    <source>
        <strain>O157:H7 / Sakai / RIMD 0509952 / EHEC</strain>
    </source>
</reference>
<sequence>MKNNAQLLMPREKMLKFGISALTDVELLALFLRTGTRGKDVLTLAKEMLENFGSLYGLLTSEYEQFSGVHGIGVAKFAQLKGIAELARRYYNVRMREESPLLSPEMTREFLQSQLTGEEREIFMVIFLDSQHRVITHSRLFSGTLNHVEVHPREIIREAIKINASALILAHNHPSGCAEPSKADKLITERIIKSCQFMDLRVLDHIVIGRGEYVSFAERGWI</sequence>
<protein>
    <recommendedName>
        <fullName evidence="1">UPF0758 protein YicR</fullName>
    </recommendedName>
</protein>
<feature type="chain" id="PRO_0000190696" description="UPF0758 protein YicR">
    <location>
        <begin position="1"/>
        <end position="222"/>
    </location>
</feature>
<feature type="domain" description="MPN" evidence="2">
    <location>
        <begin position="100"/>
        <end position="222"/>
    </location>
</feature>
<feature type="short sequence motif" description="JAMM motif" evidence="2">
    <location>
        <begin position="171"/>
        <end position="184"/>
    </location>
</feature>
<feature type="binding site" evidence="2">
    <location>
        <position position="171"/>
    </location>
    <ligand>
        <name>Zn(2+)</name>
        <dbReference type="ChEBI" id="CHEBI:29105"/>
        <note>catalytic</note>
    </ligand>
</feature>
<feature type="binding site" evidence="2">
    <location>
        <position position="173"/>
    </location>
    <ligand>
        <name>Zn(2+)</name>
        <dbReference type="ChEBI" id="CHEBI:29105"/>
        <note>catalytic</note>
    </ligand>
</feature>
<feature type="binding site" evidence="2">
    <location>
        <position position="184"/>
    </location>
    <ligand>
        <name>Zn(2+)</name>
        <dbReference type="ChEBI" id="CHEBI:29105"/>
        <note>catalytic</note>
    </ligand>
</feature>
<accession>P65958</accession>
<accession>Q8XDA3</accession>
<proteinExistence type="inferred from homology"/>
<gene>
    <name evidence="1" type="primary">yicR</name>
    <name type="ordered locus">Z5062</name>
    <name type="ordered locus">ECs4513</name>
</gene>
<evidence type="ECO:0000255" key="1">
    <source>
        <dbReference type="HAMAP-Rule" id="MF_00018"/>
    </source>
</evidence>
<evidence type="ECO:0000255" key="2">
    <source>
        <dbReference type="PROSITE-ProRule" id="PRU01182"/>
    </source>
</evidence>
<evidence type="ECO:0000305" key="3"/>
<comment type="similarity">
    <text evidence="1">Belongs to the UPF0758 family. YicR subfamily.</text>
</comment>
<comment type="sequence caution" evidence="3">
    <conflict type="erroneous initiation">
        <sequence resource="EMBL-CDS" id="AAG58782"/>
    </conflict>
    <text>Extended N-terminus.</text>
</comment>
<keyword id="KW-0378">Hydrolase</keyword>
<keyword id="KW-0479">Metal-binding</keyword>
<keyword id="KW-0482">Metalloprotease</keyword>
<keyword id="KW-0645">Protease</keyword>
<keyword id="KW-1185">Reference proteome</keyword>
<keyword id="KW-0862">Zinc</keyword>
<name>YICR_ECO57</name>
<dbReference type="EMBL" id="AE005174">
    <property type="protein sequence ID" value="AAG58782.1"/>
    <property type="status" value="ALT_INIT"/>
    <property type="molecule type" value="Genomic_DNA"/>
</dbReference>
<dbReference type="EMBL" id="BA000007">
    <property type="protein sequence ID" value="BAB37936.2"/>
    <property type="molecule type" value="Genomic_DNA"/>
</dbReference>
<dbReference type="PIR" id="A98193">
    <property type="entry name" value="A98193"/>
</dbReference>
<dbReference type="PIR" id="B86040">
    <property type="entry name" value="B86040"/>
</dbReference>
<dbReference type="RefSeq" id="NP_312540.1">
    <property type="nucleotide sequence ID" value="NC_002695.1"/>
</dbReference>
<dbReference type="SMR" id="P65958"/>
<dbReference type="STRING" id="155864.Z5062"/>
<dbReference type="GeneID" id="915533"/>
<dbReference type="KEGG" id="ece:Z5062"/>
<dbReference type="KEGG" id="ecs:ECs_4513"/>
<dbReference type="PATRIC" id="fig|386585.9.peg.4729"/>
<dbReference type="eggNOG" id="COG2003">
    <property type="taxonomic scope" value="Bacteria"/>
</dbReference>
<dbReference type="HOGENOM" id="CLU_073529_0_2_6"/>
<dbReference type="OMA" id="ELMPREK"/>
<dbReference type="Proteomes" id="UP000000558">
    <property type="component" value="Chromosome"/>
</dbReference>
<dbReference type="Proteomes" id="UP000002519">
    <property type="component" value="Chromosome"/>
</dbReference>
<dbReference type="GO" id="GO:0046872">
    <property type="term" value="F:metal ion binding"/>
    <property type="evidence" value="ECO:0007669"/>
    <property type="project" value="UniProtKB-KW"/>
</dbReference>
<dbReference type="GO" id="GO:0008237">
    <property type="term" value="F:metallopeptidase activity"/>
    <property type="evidence" value="ECO:0007669"/>
    <property type="project" value="UniProtKB-KW"/>
</dbReference>
<dbReference type="GO" id="GO:0006508">
    <property type="term" value="P:proteolysis"/>
    <property type="evidence" value="ECO:0007669"/>
    <property type="project" value="UniProtKB-KW"/>
</dbReference>
<dbReference type="CDD" id="cd08071">
    <property type="entry name" value="MPN_DUF2466"/>
    <property type="match status" value="1"/>
</dbReference>
<dbReference type="Gene3D" id="3.40.140.10">
    <property type="entry name" value="Cytidine Deaminase, domain 2"/>
    <property type="match status" value="1"/>
</dbReference>
<dbReference type="HAMAP" id="MF_00018">
    <property type="entry name" value="UPF0758_YicR"/>
    <property type="match status" value="1"/>
</dbReference>
<dbReference type="InterPro" id="IPR037518">
    <property type="entry name" value="MPN"/>
</dbReference>
<dbReference type="InterPro" id="IPR025657">
    <property type="entry name" value="RadC_JAB"/>
</dbReference>
<dbReference type="InterPro" id="IPR010994">
    <property type="entry name" value="RuvA_2-like"/>
</dbReference>
<dbReference type="InterPro" id="IPR001405">
    <property type="entry name" value="UPF0758"/>
</dbReference>
<dbReference type="InterPro" id="IPR020891">
    <property type="entry name" value="UPF0758_CS"/>
</dbReference>
<dbReference type="InterPro" id="IPR046778">
    <property type="entry name" value="UPF0758_N"/>
</dbReference>
<dbReference type="InterPro" id="IPR022820">
    <property type="entry name" value="UPF0758_YicR"/>
</dbReference>
<dbReference type="NCBIfam" id="NF000642">
    <property type="entry name" value="PRK00024.1"/>
    <property type="match status" value="1"/>
</dbReference>
<dbReference type="NCBIfam" id="TIGR00608">
    <property type="entry name" value="radc"/>
    <property type="match status" value="1"/>
</dbReference>
<dbReference type="PANTHER" id="PTHR30471">
    <property type="entry name" value="DNA REPAIR PROTEIN RADC"/>
    <property type="match status" value="1"/>
</dbReference>
<dbReference type="PANTHER" id="PTHR30471:SF3">
    <property type="entry name" value="UPF0758 PROTEIN YEES-RELATED"/>
    <property type="match status" value="1"/>
</dbReference>
<dbReference type="Pfam" id="PF04002">
    <property type="entry name" value="RadC"/>
    <property type="match status" value="1"/>
</dbReference>
<dbReference type="Pfam" id="PF20582">
    <property type="entry name" value="UPF0758_N"/>
    <property type="match status" value="1"/>
</dbReference>
<dbReference type="SUPFAM" id="SSF47781">
    <property type="entry name" value="RuvA domain 2-like"/>
    <property type="match status" value="1"/>
</dbReference>
<dbReference type="PROSITE" id="PS50249">
    <property type="entry name" value="MPN"/>
    <property type="match status" value="1"/>
</dbReference>
<dbReference type="PROSITE" id="PS01302">
    <property type="entry name" value="UPF0758"/>
    <property type="match status" value="1"/>
</dbReference>